<sequence length="79" mass="8874">MSNMMNKFAEKLQGNDDSHQKGKNAKSSNKERDDMNMDMGMGHDQSEGGMKMGHDQSGTKMNAGRGIANDWKTYENMKK</sequence>
<keyword id="KW-1185">Reference proteome</keyword>
<reference key="1">
    <citation type="journal article" date="1995" name="Mol. Microbiol.">
        <title>A genomic locus in Saccharomyces cerevisiae with four genes up-regulated by osmotic stress.</title>
        <authorList>
            <person name="Miralles V.J."/>
            <person name="Serrano R."/>
        </authorList>
    </citation>
    <scope>NUCLEOTIDE SEQUENCE [GENOMIC DNA]</scope>
    <source>
        <strain>DBY939</strain>
    </source>
</reference>
<reference key="2">
    <citation type="journal article" date="1997" name="Nature">
        <title>The nucleotide sequence of Saccharomyces cerevisiae chromosome XIII.</title>
        <authorList>
            <person name="Bowman S."/>
            <person name="Churcher C.M."/>
            <person name="Badcock K."/>
            <person name="Brown D."/>
            <person name="Chillingworth T."/>
            <person name="Connor R."/>
            <person name="Dedman K."/>
            <person name="Devlin K."/>
            <person name="Gentles S."/>
            <person name="Hamlin N."/>
            <person name="Hunt S."/>
            <person name="Jagels K."/>
            <person name="Lye G."/>
            <person name="Moule S."/>
            <person name="Odell C."/>
            <person name="Pearson D."/>
            <person name="Rajandream M.A."/>
            <person name="Rice P."/>
            <person name="Skelton J."/>
            <person name="Walsh S.V."/>
            <person name="Whitehead S."/>
            <person name="Barrell B.G."/>
        </authorList>
    </citation>
    <scope>NUCLEOTIDE SEQUENCE [LARGE SCALE GENOMIC DNA]</scope>
    <source>
        <strain>ATCC 204508 / S288c</strain>
    </source>
</reference>
<reference key="3">
    <citation type="journal article" date="2014" name="G3 (Bethesda)">
        <title>The reference genome sequence of Saccharomyces cerevisiae: Then and now.</title>
        <authorList>
            <person name="Engel S.R."/>
            <person name="Dietrich F.S."/>
            <person name="Fisk D.G."/>
            <person name="Binkley G."/>
            <person name="Balakrishnan R."/>
            <person name="Costanzo M.C."/>
            <person name="Dwight S.S."/>
            <person name="Hitz B.C."/>
            <person name="Karra K."/>
            <person name="Nash R.S."/>
            <person name="Weng S."/>
            <person name="Wong E.D."/>
            <person name="Lloyd P."/>
            <person name="Skrzypek M.S."/>
            <person name="Miyasato S.R."/>
            <person name="Simison M."/>
            <person name="Cherry J.M."/>
        </authorList>
    </citation>
    <scope>GENOME REANNOTATION</scope>
    <source>
        <strain>ATCC 204508 / S288c</strain>
    </source>
</reference>
<reference key="4">
    <citation type="journal article" date="2007" name="Genome Res.">
        <title>Approaching a complete repository of sequence-verified protein-encoding clones for Saccharomyces cerevisiae.</title>
        <authorList>
            <person name="Hu Y."/>
            <person name="Rolfs A."/>
            <person name="Bhullar B."/>
            <person name="Murthy T.V.S."/>
            <person name="Zhu C."/>
            <person name="Berger M.F."/>
            <person name="Camargo A.A."/>
            <person name="Kelley F."/>
            <person name="McCarron S."/>
            <person name="Jepson D."/>
            <person name="Richardson A."/>
            <person name="Raphael J."/>
            <person name="Moreira D."/>
            <person name="Taycher E."/>
            <person name="Zuo D."/>
            <person name="Mohr S."/>
            <person name="Kane M.F."/>
            <person name="Williamson J."/>
            <person name="Simpson A.J.G."/>
            <person name="Bulyk M.L."/>
            <person name="Harlow E."/>
            <person name="Marsischky G."/>
            <person name="Kolodner R.D."/>
            <person name="LaBaer J."/>
        </authorList>
    </citation>
    <scope>NUCLEOTIDE SEQUENCE [GENOMIC DNA]</scope>
    <source>
        <strain>ATCC 204508 / S288c</strain>
    </source>
</reference>
<reference key="5">
    <citation type="journal article" date="2003" name="Nature">
        <title>Global analysis of protein expression in yeast.</title>
        <authorList>
            <person name="Ghaemmaghami S."/>
            <person name="Huh W.-K."/>
            <person name="Bower K."/>
            <person name="Howson R.W."/>
            <person name="Belle A."/>
            <person name="Dephoure N."/>
            <person name="O'Shea E.K."/>
            <person name="Weissman J.S."/>
        </authorList>
    </citation>
    <scope>LEVEL OF PROTEIN EXPRESSION [LARGE SCALE ANALYSIS]</scope>
</reference>
<evidence type="ECO:0000256" key="1">
    <source>
        <dbReference type="SAM" id="MobiDB-lite"/>
    </source>
</evidence>
<evidence type="ECO:0000269" key="2">
    <source>
    </source>
</evidence>
<evidence type="ECO:0000305" key="3"/>
<accession>P50263</accession>
<accession>D6VZZ7</accession>
<organism>
    <name type="scientific">Saccharomyces cerevisiae (strain ATCC 204508 / S288c)</name>
    <name type="common">Baker's yeast</name>
    <dbReference type="NCBI Taxonomy" id="559292"/>
    <lineage>
        <taxon>Eukaryota</taxon>
        <taxon>Fungi</taxon>
        <taxon>Dikarya</taxon>
        <taxon>Ascomycota</taxon>
        <taxon>Saccharomycotina</taxon>
        <taxon>Saccharomycetes</taxon>
        <taxon>Saccharomycetales</taxon>
        <taxon>Saccharomycetaceae</taxon>
        <taxon>Saccharomyces</taxon>
    </lineage>
</organism>
<name>SIP18_YEAST</name>
<dbReference type="EMBL" id="X85988">
    <property type="protein sequence ID" value="CAA59976.1"/>
    <property type="molecule type" value="Genomic_DNA"/>
</dbReference>
<dbReference type="EMBL" id="Z49808">
    <property type="protein sequence ID" value="CAA89908.1"/>
    <property type="molecule type" value="Genomic_DNA"/>
</dbReference>
<dbReference type="EMBL" id="AY558518">
    <property type="protein sequence ID" value="AAS56844.1"/>
    <property type="molecule type" value="Genomic_DNA"/>
</dbReference>
<dbReference type="EMBL" id="BK006946">
    <property type="protein sequence ID" value="DAA10071.1"/>
    <property type="molecule type" value="Genomic_DNA"/>
</dbReference>
<dbReference type="PIR" id="S70188">
    <property type="entry name" value="S70188"/>
</dbReference>
<dbReference type="RefSeq" id="NP_013900.1">
    <property type="nucleotide sequence ID" value="NM_001182681.1"/>
</dbReference>
<dbReference type="BioGRID" id="35353">
    <property type="interactions" value="28"/>
</dbReference>
<dbReference type="FunCoup" id="P50263">
    <property type="interactions" value="76"/>
</dbReference>
<dbReference type="IntAct" id="P50263">
    <property type="interactions" value="3"/>
</dbReference>
<dbReference type="STRING" id="4932.YMR175W"/>
<dbReference type="iPTMnet" id="P50263"/>
<dbReference type="PaxDb" id="4932-YMR175W"/>
<dbReference type="PeptideAtlas" id="P50263"/>
<dbReference type="TopDownProteomics" id="P50263"/>
<dbReference type="EnsemblFungi" id="YMR175W_mRNA">
    <property type="protein sequence ID" value="YMR175W"/>
    <property type="gene ID" value="YMR175W"/>
</dbReference>
<dbReference type="GeneID" id="855213"/>
<dbReference type="KEGG" id="sce:YMR175W"/>
<dbReference type="AGR" id="SGD:S000004787"/>
<dbReference type="SGD" id="S000004787">
    <property type="gene designation" value="SIP18"/>
</dbReference>
<dbReference type="VEuPathDB" id="FungiDB:YMR175W"/>
<dbReference type="HOGENOM" id="CLU_2607358_0_0_1"/>
<dbReference type="InParanoid" id="P50263"/>
<dbReference type="OrthoDB" id="4066847at2759"/>
<dbReference type="BioCyc" id="YEAST:G3O-32863-MONOMER"/>
<dbReference type="BioGRID-ORCS" id="855213">
    <property type="hits" value="0 hits in 10 CRISPR screens"/>
</dbReference>
<dbReference type="PRO" id="PR:P50263"/>
<dbReference type="Proteomes" id="UP000002311">
    <property type="component" value="Chromosome XIII"/>
</dbReference>
<dbReference type="RNAct" id="P50263">
    <property type="molecule type" value="protein"/>
</dbReference>
<dbReference type="GO" id="GO:0005737">
    <property type="term" value="C:cytoplasm"/>
    <property type="evidence" value="ECO:0000314"/>
    <property type="project" value="SGD"/>
</dbReference>
<dbReference type="GO" id="GO:0005543">
    <property type="term" value="F:phospholipid binding"/>
    <property type="evidence" value="ECO:0000314"/>
    <property type="project" value="SGD"/>
</dbReference>
<dbReference type="GO" id="GO:0042631">
    <property type="term" value="P:cellular response to water deprivation"/>
    <property type="evidence" value="ECO:0000315"/>
    <property type="project" value="SGD"/>
</dbReference>
<protein>
    <recommendedName>
        <fullName>Protein SIP18</fullName>
    </recommendedName>
</protein>
<feature type="chain" id="PRO_0000097764" description="Protein SIP18">
    <location>
        <begin position="1"/>
        <end position="79"/>
    </location>
</feature>
<feature type="region of interest" description="Disordered" evidence="1">
    <location>
        <begin position="1"/>
        <end position="79"/>
    </location>
</feature>
<feature type="compositionally biased region" description="Basic and acidic residues" evidence="1">
    <location>
        <begin position="8"/>
        <end position="20"/>
    </location>
</feature>
<feature type="sequence conflict" description="In Ref. 1; CAA59976." evidence="3" ref="1">
    <original>EG</original>
    <variation>K</variation>
    <location>
        <begin position="47"/>
        <end position="48"/>
    </location>
</feature>
<feature type="sequence conflict" description="In Ref. 1; CAA59976." evidence="3" ref="1">
    <original>NMKK</original>
    <variation>HENMYVFGALTKSSYFFNGLFMNCLCLCSLYSKSISAYFSEFSSTNIYKSYLRLPSVLYYVCMMHTMMPNQLDAVGIQSSESLLM</variation>
    <location>
        <begin position="76"/>
        <end position="79"/>
    </location>
</feature>
<proteinExistence type="evidence at protein level"/>
<gene>
    <name type="primary">SIP18</name>
    <name type="ordered locus">YMR175W</name>
    <name type="ORF">YM8010.05</name>
</gene>
<comment type="miscellaneous">
    <text evidence="2">Present with 2300 molecules/cell in log phase SD medium.</text>
</comment>